<accession>A1WYU3</accession>
<feature type="chain" id="PRO_0000315101" description="UDP-N-acetylglucosamine--N-acetylmuramyl-(pentapeptide) pyrophosphoryl-undecaprenol N-acetylglucosamine transferase">
    <location>
        <begin position="1"/>
        <end position="358"/>
    </location>
</feature>
<feature type="binding site" evidence="1">
    <location>
        <begin position="13"/>
        <end position="15"/>
    </location>
    <ligand>
        <name>UDP-N-acetyl-alpha-D-glucosamine</name>
        <dbReference type="ChEBI" id="CHEBI:57705"/>
    </ligand>
</feature>
<feature type="binding site" evidence="1">
    <location>
        <position position="125"/>
    </location>
    <ligand>
        <name>UDP-N-acetyl-alpha-D-glucosamine</name>
        <dbReference type="ChEBI" id="CHEBI:57705"/>
    </ligand>
</feature>
<feature type="binding site" evidence="1">
    <location>
        <position position="162"/>
    </location>
    <ligand>
        <name>UDP-N-acetyl-alpha-D-glucosamine</name>
        <dbReference type="ChEBI" id="CHEBI:57705"/>
    </ligand>
</feature>
<feature type="binding site" evidence="1">
    <location>
        <position position="190"/>
    </location>
    <ligand>
        <name>UDP-N-acetyl-alpha-D-glucosamine</name>
        <dbReference type="ChEBI" id="CHEBI:57705"/>
    </ligand>
</feature>
<feature type="binding site" evidence="1">
    <location>
        <position position="244"/>
    </location>
    <ligand>
        <name>UDP-N-acetyl-alpha-D-glucosamine</name>
        <dbReference type="ChEBI" id="CHEBI:57705"/>
    </ligand>
</feature>
<feature type="binding site" evidence="1">
    <location>
        <begin position="263"/>
        <end position="268"/>
    </location>
    <ligand>
        <name>UDP-N-acetyl-alpha-D-glucosamine</name>
        <dbReference type="ChEBI" id="CHEBI:57705"/>
    </ligand>
</feature>
<feature type="binding site" evidence="1">
    <location>
        <position position="289"/>
    </location>
    <ligand>
        <name>UDP-N-acetyl-alpha-D-glucosamine</name>
        <dbReference type="ChEBI" id="CHEBI:57705"/>
    </ligand>
</feature>
<comment type="function">
    <text evidence="1">Cell wall formation. Catalyzes the transfer of a GlcNAc subunit on undecaprenyl-pyrophosphoryl-MurNAc-pentapeptide (lipid intermediate I) to form undecaprenyl-pyrophosphoryl-MurNAc-(pentapeptide)GlcNAc (lipid intermediate II).</text>
</comment>
<comment type="catalytic activity">
    <reaction evidence="1">
        <text>di-trans,octa-cis-undecaprenyl diphospho-N-acetyl-alpha-D-muramoyl-L-alanyl-D-glutamyl-meso-2,6-diaminopimeloyl-D-alanyl-D-alanine + UDP-N-acetyl-alpha-D-glucosamine = di-trans,octa-cis-undecaprenyl diphospho-[N-acetyl-alpha-D-glucosaminyl-(1-&gt;4)]-N-acetyl-alpha-D-muramoyl-L-alanyl-D-glutamyl-meso-2,6-diaminopimeloyl-D-alanyl-D-alanine + UDP + H(+)</text>
        <dbReference type="Rhea" id="RHEA:31227"/>
        <dbReference type="ChEBI" id="CHEBI:15378"/>
        <dbReference type="ChEBI" id="CHEBI:57705"/>
        <dbReference type="ChEBI" id="CHEBI:58223"/>
        <dbReference type="ChEBI" id="CHEBI:61387"/>
        <dbReference type="ChEBI" id="CHEBI:61388"/>
        <dbReference type="EC" id="2.4.1.227"/>
    </reaction>
</comment>
<comment type="pathway">
    <text evidence="1">Cell wall biogenesis; peptidoglycan biosynthesis.</text>
</comment>
<comment type="subcellular location">
    <subcellularLocation>
        <location evidence="1">Cell inner membrane</location>
        <topology evidence="1">Peripheral membrane protein</topology>
        <orientation evidence="1">Cytoplasmic side</orientation>
    </subcellularLocation>
</comment>
<comment type="similarity">
    <text evidence="1">Belongs to the glycosyltransferase 28 family. MurG subfamily.</text>
</comment>
<evidence type="ECO:0000255" key="1">
    <source>
        <dbReference type="HAMAP-Rule" id="MF_00033"/>
    </source>
</evidence>
<reference key="1">
    <citation type="submission" date="2006-12" db="EMBL/GenBank/DDBJ databases">
        <title>Complete sequence of Halorhodospira halophila SL1.</title>
        <authorList>
            <consortium name="US DOE Joint Genome Institute"/>
            <person name="Copeland A."/>
            <person name="Lucas S."/>
            <person name="Lapidus A."/>
            <person name="Barry K."/>
            <person name="Detter J.C."/>
            <person name="Glavina del Rio T."/>
            <person name="Hammon N."/>
            <person name="Israni S."/>
            <person name="Dalin E."/>
            <person name="Tice H."/>
            <person name="Pitluck S."/>
            <person name="Saunders E."/>
            <person name="Brettin T."/>
            <person name="Bruce D."/>
            <person name="Han C."/>
            <person name="Tapia R."/>
            <person name="Schmutz J."/>
            <person name="Larimer F."/>
            <person name="Land M."/>
            <person name="Hauser L."/>
            <person name="Kyrpides N."/>
            <person name="Mikhailova N."/>
            <person name="Hoff W."/>
            <person name="Richardson P."/>
        </authorList>
    </citation>
    <scope>NUCLEOTIDE SEQUENCE [LARGE SCALE GENOMIC DNA]</scope>
    <source>
        <strain>DSM 244 / SL1</strain>
    </source>
</reference>
<sequence>MSVRTVAIAAGGTGGHVYPGLAVADALRERGHRVVWLGTRAGLEGRVVPAAGLDAEWLEIGGMRGKGLATIAALPWRLGRAVAVAGAALRRQRPDVVLGMGGYVAGPVGLAARLAGRPLIIHEQNARAGMTNRFLARLGHRVLTGFPDALGARSEWVGNPIRTRIHRLESPQERYARREGAPRVLVLGGSQGARALNRYVPQALSAIGGGQPQVLHQAGELTLEEARTEYGRAGLDGAEVVPFIEDMAGAYAWADLVVARSGALTVAELAAAGVPAVLVPLPWAVDDHQTANAEWLCAAGAARRLLQPDLEQGALGPVLAELLGDRRRLAEMGEAARGVARPDATDRVATICEEVAHG</sequence>
<proteinExistence type="inferred from homology"/>
<keyword id="KW-0131">Cell cycle</keyword>
<keyword id="KW-0132">Cell division</keyword>
<keyword id="KW-0997">Cell inner membrane</keyword>
<keyword id="KW-1003">Cell membrane</keyword>
<keyword id="KW-0133">Cell shape</keyword>
<keyword id="KW-0961">Cell wall biogenesis/degradation</keyword>
<keyword id="KW-0328">Glycosyltransferase</keyword>
<keyword id="KW-0472">Membrane</keyword>
<keyword id="KW-0573">Peptidoglycan synthesis</keyword>
<keyword id="KW-1185">Reference proteome</keyword>
<keyword id="KW-0808">Transferase</keyword>
<gene>
    <name evidence="1" type="primary">murG</name>
    <name type="ordered locus">Hhal_2091</name>
</gene>
<organism>
    <name type="scientific">Halorhodospira halophila (strain DSM 244 / SL1)</name>
    <name type="common">Ectothiorhodospira halophila (strain DSM 244 / SL1)</name>
    <dbReference type="NCBI Taxonomy" id="349124"/>
    <lineage>
        <taxon>Bacteria</taxon>
        <taxon>Pseudomonadati</taxon>
        <taxon>Pseudomonadota</taxon>
        <taxon>Gammaproteobacteria</taxon>
        <taxon>Chromatiales</taxon>
        <taxon>Ectothiorhodospiraceae</taxon>
        <taxon>Halorhodospira</taxon>
    </lineage>
</organism>
<name>MURG_HALHL</name>
<dbReference type="EC" id="2.4.1.227" evidence="1"/>
<dbReference type="EMBL" id="CP000544">
    <property type="protein sequence ID" value="ABM62855.1"/>
    <property type="molecule type" value="Genomic_DNA"/>
</dbReference>
<dbReference type="RefSeq" id="WP_011814877.1">
    <property type="nucleotide sequence ID" value="NC_008789.1"/>
</dbReference>
<dbReference type="SMR" id="A1WYU3"/>
<dbReference type="STRING" id="349124.Hhal_2091"/>
<dbReference type="CAZy" id="GT28">
    <property type="family name" value="Glycosyltransferase Family 28"/>
</dbReference>
<dbReference type="KEGG" id="hha:Hhal_2091"/>
<dbReference type="eggNOG" id="COG0707">
    <property type="taxonomic scope" value="Bacteria"/>
</dbReference>
<dbReference type="HOGENOM" id="CLU_037404_2_0_6"/>
<dbReference type="OrthoDB" id="9808936at2"/>
<dbReference type="UniPathway" id="UPA00219"/>
<dbReference type="Proteomes" id="UP000000647">
    <property type="component" value="Chromosome"/>
</dbReference>
<dbReference type="GO" id="GO:0005886">
    <property type="term" value="C:plasma membrane"/>
    <property type="evidence" value="ECO:0007669"/>
    <property type="project" value="UniProtKB-SubCell"/>
</dbReference>
<dbReference type="GO" id="GO:0051991">
    <property type="term" value="F:UDP-N-acetyl-D-glucosamine:N-acetylmuramoyl-L-alanyl-D-glutamyl-meso-2,6-diaminopimelyl-D-alanyl-D-alanine-diphosphoundecaprenol 4-beta-N-acetylglucosaminlytransferase activity"/>
    <property type="evidence" value="ECO:0007669"/>
    <property type="project" value="RHEA"/>
</dbReference>
<dbReference type="GO" id="GO:0050511">
    <property type="term" value="F:undecaprenyldiphospho-muramoylpentapeptide beta-N-acetylglucosaminyltransferase activity"/>
    <property type="evidence" value="ECO:0007669"/>
    <property type="project" value="UniProtKB-UniRule"/>
</dbReference>
<dbReference type="GO" id="GO:0005975">
    <property type="term" value="P:carbohydrate metabolic process"/>
    <property type="evidence" value="ECO:0007669"/>
    <property type="project" value="InterPro"/>
</dbReference>
<dbReference type="GO" id="GO:0051301">
    <property type="term" value="P:cell division"/>
    <property type="evidence" value="ECO:0007669"/>
    <property type="project" value="UniProtKB-KW"/>
</dbReference>
<dbReference type="GO" id="GO:0071555">
    <property type="term" value="P:cell wall organization"/>
    <property type="evidence" value="ECO:0007669"/>
    <property type="project" value="UniProtKB-KW"/>
</dbReference>
<dbReference type="GO" id="GO:0030259">
    <property type="term" value="P:lipid glycosylation"/>
    <property type="evidence" value="ECO:0007669"/>
    <property type="project" value="UniProtKB-UniRule"/>
</dbReference>
<dbReference type="GO" id="GO:0009252">
    <property type="term" value="P:peptidoglycan biosynthetic process"/>
    <property type="evidence" value="ECO:0007669"/>
    <property type="project" value="UniProtKB-UniRule"/>
</dbReference>
<dbReference type="GO" id="GO:0008360">
    <property type="term" value="P:regulation of cell shape"/>
    <property type="evidence" value="ECO:0007669"/>
    <property type="project" value="UniProtKB-KW"/>
</dbReference>
<dbReference type="CDD" id="cd03785">
    <property type="entry name" value="GT28_MurG"/>
    <property type="match status" value="1"/>
</dbReference>
<dbReference type="Gene3D" id="3.40.50.2000">
    <property type="entry name" value="Glycogen Phosphorylase B"/>
    <property type="match status" value="2"/>
</dbReference>
<dbReference type="HAMAP" id="MF_00033">
    <property type="entry name" value="MurG"/>
    <property type="match status" value="1"/>
</dbReference>
<dbReference type="InterPro" id="IPR006009">
    <property type="entry name" value="GlcNAc_MurG"/>
</dbReference>
<dbReference type="InterPro" id="IPR007235">
    <property type="entry name" value="Glyco_trans_28_C"/>
</dbReference>
<dbReference type="InterPro" id="IPR004276">
    <property type="entry name" value="GlycoTrans_28_N"/>
</dbReference>
<dbReference type="NCBIfam" id="TIGR01133">
    <property type="entry name" value="murG"/>
    <property type="match status" value="1"/>
</dbReference>
<dbReference type="PANTHER" id="PTHR21015:SF22">
    <property type="entry name" value="GLYCOSYLTRANSFERASE"/>
    <property type="match status" value="1"/>
</dbReference>
<dbReference type="PANTHER" id="PTHR21015">
    <property type="entry name" value="UDP-N-ACETYLGLUCOSAMINE--N-ACETYLMURAMYL-(PENTAPEPTIDE) PYROPHOSPHORYL-UNDECAPRENOL N-ACETYLGLUCOSAMINE TRANSFERASE 1"/>
    <property type="match status" value="1"/>
</dbReference>
<dbReference type="Pfam" id="PF04101">
    <property type="entry name" value="Glyco_tran_28_C"/>
    <property type="match status" value="1"/>
</dbReference>
<dbReference type="Pfam" id="PF03033">
    <property type="entry name" value="Glyco_transf_28"/>
    <property type="match status" value="1"/>
</dbReference>
<dbReference type="SUPFAM" id="SSF53756">
    <property type="entry name" value="UDP-Glycosyltransferase/glycogen phosphorylase"/>
    <property type="match status" value="1"/>
</dbReference>
<protein>
    <recommendedName>
        <fullName evidence="1">UDP-N-acetylglucosamine--N-acetylmuramyl-(pentapeptide) pyrophosphoryl-undecaprenol N-acetylglucosamine transferase</fullName>
        <ecNumber evidence="1">2.4.1.227</ecNumber>
    </recommendedName>
    <alternativeName>
        <fullName evidence="1">Undecaprenyl-PP-MurNAc-pentapeptide-UDPGlcNAc GlcNAc transferase</fullName>
    </alternativeName>
</protein>